<evidence type="ECO:0000250" key="1"/>
<evidence type="ECO:0000250" key="2">
    <source>
        <dbReference type="UniProtKB" id="Q91XT9"/>
    </source>
</evidence>
<evidence type="ECO:0000250" key="3">
    <source>
        <dbReference type="UniProtKB" id="Q9NR71"/>
    </source>
</evidence>
<evidence type="ECO:0000255" key="4"/>
<evidence type="ECO:0000269" key="5">
    <source>
    </source>
</evidence>
<evidence type="ECO:0000269" key="6">
    <source>
    </source>
</evidence>
<evidence type="ECO:0000269" key="7">
    <source>
    </source>
</evidence>
<evidence type="ECO:0000269" key="8">
    <source>
    </source>
</evidence>
<evidence type="ECO:0000269" key="9">
    <source>
    </source>
</evidence>
<evidence type="ECO:0000269" key="10">
    <source>
    </source>
</evidence>
<evidence type="ECO:0000269" key="11">
    <source>
    </source>
</evidence>
<evidence type="ECO:0000269" key="12">
    <source>
    </source>
</evidence>
<evidence type="ECO:0000305" key="13"/>
<evidence type="ECO:0000305" key="14">
    <source>
    </source>
</evidence>
<reference key="1">
    <citation type="journal article" date="2000" name="J. Biol. Chem.">
        <title>Molecular cloning of the full-length cDNA encoding mouse neutral ceramidase. A novel but highly conserved gene family of neutral/alkaline ceramidases.</title>
        <authorList>
            <person name="Tani M."/>
            <person name="Okino N."/>
            <person name="Mori K."/>
            <person name="Tanigawa T."/>
            <person name="Izu H."/>
            <person name="Ito M."/>
        </authorList>
    </citation>
    <scope>NUCLEOTIDE SEQUENCE [MRNA]</scope>
    <scope>FUNCTION</scope>
    <scope>CATALYTIC ACTIVITY</scope>
    <scope>TISSUE SPECIFICITY</scope>
    <scope>GLYCOSYLATION</scope>
    <source>
        <tissue>Brain</tissue>
        <tissue>Liver</tissue>
    </source>
</reference>
<reference key="2">
    <citation type="journal article" date="2005" name="Science">
        <title>The transcriptional landscape of the mammalian genome.</title>
        <authorList>
            <person name="Carninci P."/>
            <person name="Kasukawa T."/>
            <person name="Katayama S."/>
            <person name="Gough J."/>
            <person name="Frith M.C."/>
            <person name="Maeda N."/>
            <person name="Oyama R."/>
            <person name="Ravasi T."/>
            <person name="Lenhard B."/>
            <person name="Wells C."/>
            <person name="Kodzius R."/>
            <person name="Shimokawa K."/>
            <person name="Bajic V.B."/>
            <person name="Brenner S.E."/>
            <person name="Batalov S."/>
            <person name="Forrest A.R."/>
            <person name="Zavolan M."/>
            <person name="Davis M.J."/>
            <person name="Wilming L.G."/>
            <person name="Aidinis V."/>
            <person name="Allen J.E."/>
            <person name="Ambesi-Impiombato A."/>
            <person name="Apweiler R."/>
            <person name="Aturaliya R.N."/>
            <person name="Bailey T.L."/>
            <person name="Bansal M."/>
            <person name="Baxter L."/>
            <person name="Beisel K.W."/>
            <person name="Bersano T."/>
            <person name="Bono H."/>
            <person name="Chalk A.M."/>
            <person name="Chiu K.P."/>
            <person name="Choudhary V."/>
            <person name="Christoffels A."/>
            <person name="Clutterbuck D.R."/>
            <person name="Crowe M.L."/>
            <person name="Dalla E."/>
            <person name="Dalrymple B.P."/>
            <person name="de Bono B."/>
            <person name="Della Gatta G."/>
            <person name="di Bernardo D."/>
            <person name="Down T."/>
            <person name="Engstrom P."/>
            <person name="Fagiolini M."/>
            <person name="Faulkner G."/>
            <person name="Fletcher C.F."/>
            <person name="Fukushima T."/>
            <person name="Furuno M."/>
            <person name="Futaki S."/>
            <person name="Gariboldi M."/>
            <person name="Georgii-Hemming P."/>
            <person name="Gingeras T.R."/>
            <person name="Gojobori T."/>
            <person name="Green R.E."/>
            <person name="Gustincich S."/>
            <person name="Harbers M."/>
            <person name="Hayashi Y."/>
            <person name="Hensch T.K."/>
            <person name="Hirokawa N."/>
            <person name="Hill D."/>
            <person name="Huminiecki L."/>
            <person name="Iacono M."/>
            <person name="Ikeo K."/>
            <person name="Iwama A."/>
            <person name="Ishikawa T."/>
            <person name="Jakt M."/>
            <person name="Kanapin A."/>
            <person name="Katoh M."/>
            <person name="Kawasawa Y."/>
            <person name="Kelso J."/>
            <person name="Kitamura H."/>
            <person name="Kitano H."/>
            <person name="Kollias G."/>
            <person name="Krishnan S.P."/>
            <person name="Kruger A."/>
            <person name="Kummerfeld S.K."/>
            <person name="Kurochkin I.V."/>
            <person name="Lareau L.F."/>
            <person name="Lazarevic D."/>
            <person name="Lipovich L."/>
            <person name="Liu J."/>
            <person name="Liuni S."/>
            <person name="McWilliam S."/>
            <person name="Madan Babu M."/>
            <person name="Madera M."/>
            <person name="Marchionni L."/>
            <person name="Matsuda H."/>
            <person name="Matsuzawa S."/>
            <person name="Miki H."/>
            <person name="Mignone F."/>
            <person name="Miyake S."/>
            <person name="Morris K."/>
            <person name="Mottagui-Tabar S."/>
            <person name="Mulder N."/>
            <person name="Nakano N."/>
            <person name="Nakauchi H."/>
            <person name="Ng P."/>
            <person name="Nilsson R."/>
            <person name="Nishiguchi S."/>
            <person name="Nishikawa S."/>
            <person name="Nori F."/>
            <person name="Ohara O."/>
            <person name="Okazaki Y."/>
            <person name="Orlando V."/>
            <person name="Pang K.C."/>
            <person name="Pavan W.J."/>
            <person name="Pavesi G."/>
            <person name="Pesole G."/>
            <person name="Petrovsky N."/>
            <person name="Piazza S."/>
            <person name="Reed J."/>
            <person name="Reid J.F."/>
            <person name="Ring B.Z."/>
            <person name="Ringwald M."/>
            <person name="Rost B."/>
            <person name="Ruan Y."/>
            <person name="Salzberg S.L."/>
            <person name="Sandelin A."/>
            <person name="Schneider C."/>
            <person name="Schoenbach C."/>
            <person name="Sekiguchi K."/>
            <person name="Semple C.A."/>
            <person name="Seno S."/>
            <person name="Sessa L."/>
            <person name="Sheng Y."/>
            <person name="Shibata Y."/>
            <person name="Shimada H."/>
            <person name="Shimada K."/>
            <person name="Silva D."/>
            <person name="Sinclair B."/>
            <person name="Sperling S."/>
            <person name="Stupka E."/>
            <person name="Sugiura K."/>
            <person name="Sultana R."/>
            <person name="Takenaka Y."/>
            <person name="Taki K."/>
            <person name="Tammoja K."/>
            <person name="Tan S.L."/>
            <person name="Tang S."/>
            <person name="Taylor M.S."/>
            <person name="Tegner J."/>
            <person name="Teichmann S.A."/>
            <person name="Ueda H.R."/>
            <person name="van Nimwegen E."/>
            <person name="Verardo R."/>
            <person name="Wei C.L."/>
            <person name="Yagi K."/>
            <person name="Yamanishi H."/>
            <person name="Zabarovsky E."/>
            <person name="Zhu S."/>
            <person name="Zimmer A."/>
            <person name="Hide W."/>
            <person name="Bult C."/>
            <person name="Grimmond S.M."/>
            <person name="Teasdale R.D."/>
            <person name="Liu E.T."/>
            <person name="Brusic V."/>
            <person name="Quackenbush J."/>
            <person name="Wahlestedt C."/>
            <person name="Mattick J.S."/>
            <person name="Hume D.A."/>
            <person name="Kai C."/>
            <person name="Sasaki D."/>
            <person name="Tomaru Y."/>
            <person name="Fukuda S."/>
            <person name="Kanamori-Katayama M."/>
            <person name="Suzuki M."/>
            <person name="Aoki J."/>
            <person name="Arakawa T."/>
            <person name="Iida J."/>
            <person name="Imamura K."/>
            <person name="Itoh M."/>
            <person name="Kato T."/>
            <person name="Kawaji H."/>
            <person name="Kawagashira N."/>
            <person name="Kawashima T."/>
            <person name="Kojima M."/>
            <person name="Kondo S."/>
            <person name="Konno H."/>
            <person name="Nakano K."/>
            <person name="Ninomiya N."/>
            <person name="Nishio T."/>
            <person name="Okada M."/>
            <person name="Plessy C."/>
            <person name="Shibata K."/>
            <person name="Shiraki T."/>
            <person name="Suzuki S."/>
            <person name="Tagami M."/>
            <person name="Waki K."/>
            <person name="Watahiki A."/>
            <person name="Okamura-Oho Y."/>
            <person name="Suzuki H."/>
            <person name="Kawai J."/>
            <person name="Hayashizaki Y."/>
        </authorList>
    </citation>
    <scope>NUCLEOTIDE SEQUENCE [LARGE SCALE MRNA]</scope>
    <source>
        <strain>C57BL/6J</strain>
        <tissue>Adipose tissue</tissue>
        <tissue>Corpus striatum</tissue>
        <tissue>Egg</tissue>
        <tissue>Lung</tissue>
    </source>
</reference>
<reference key="3">
    <citation type="journal article" date="2004" name="Genome Res.">
        <title>The status, quality, and expansion of the NIH full-length cDNA project: the Mammalian Gene Collection (MGC).</title>
        <authorList>
            <consortium name="The MGC Project Team"/>
        </authorList>
    </citation>
    <scope>NUCLEOTIDE SEQUENCE [LARGE SCALE MRNA] OF 261-756</scope>
    <source>
        <strain>FVB/N</strain>
        <tissue>Liver</tissue>
    </source>
</reference>
<reference key="4">
    <citation type="journal article" date="2000" name="J. Biol. Chem.">
        <title>Purification and characterization of a neutral ceramidase from mouse liver. A single protein catalyzes the reversible reaction in which ceramide is both hydrolyzed and synthesized.</title>
        <authorList>
            <person name="Tani M."/>
            <person name="Okino N."/>
            <person name="Mitsutake S."/>
            <person name="Tanigawa T."/>
            <person name="Izu H."/>
            <person name="Ito M."/>
        </authorList>
    </citation>
    <scope>PROTEIN SEQUENCE OF 309-343 AND 592-603</scope>
    <scope>FUNCTION</scope>
    <scope>CATALYTIC ACTIVITY</scope>
    <scope>BIOPHYSICOCHEMICAL PROPERTIES</scope>
    <scope>GLYCOSYLATION</scope>
    <source>
        <tissue>Liver</tissue>
    </source>
</reference>
<reference key="5">
    <citation type="journal article" date="2001" name="FEBS Lett.">
        <title>Localization of neutral ceramidase in caveolin-enriched light membranes of murine endothelial cells.</title>
        <authorList>
            <person name="Romiti E."/>
            <person name="Meacci E."/>
            <person name="Tanzi G."/>
            <person name="Becciolini L."/>
            <person name="Mitsutake S."/>
            <person name="Farnararo M."/>
            <person name="Ito M."/>
            <person name="Bruni P."/>
        </authorList>
    </citation>
    <scope>SUBCELLULAR LOCATION</scope>
</reference>
<reference key="6">
    <citation type="journal article" date="2003" name="Arch. Biochem. Biophys.">
        <title>Neutral ceramidase secreted by endothelial cells is released in part associated with caveolin-1.</title>
        <authorList>
            <person name="Romiti E."/>
            <person name="Meacci E."/>
            <person name="Donati C."/>
            <person name="Formigli L."/>
            <person name="Zecchi-Orlandini S."/>
            <person name="Farnararo M."/>
            <person name="Ito M."/>
            <person name="Bruni P."/>
        </authorList>
    </citation>
    <scope>SUBCELLULAR LOCATION</scope>
    <scope>INTERACTION WITH CAV1</scope>
</reference>
<reference key="7">
    <citation type="journal article" date="2003" name="Gene">
        <title>Neutral ceramidase gene: role in regulating ceramide-induced apoptosis.</title>
        <authorList>
            <person name="Choi M.S."/>
            <person name="Anderson M.A."/>
            <person name="Zhang Z."/>
            <person name="Zimonjic D.B."/>
            <person name="Popescu N."/>
            <person name="Mukherjee A.B."/>
        </authorList>
    </citation>
    <scope>FUNCTION</scope>
    <scope>CATALYTIC ACTIVITY</scope>
    <scope>ACTIVITY REGULATION</scope>
    <scope>TISSUE SPECIFICITY</scope>
</reference>
<reference key="8">
    <citation type="journal article" date="2005" name="J. Biol. Chem.">
        <title>Involvement of neutral ceramidase in ceramide metabolism at the plasma membrane and in extracellular milieu.</title>
        <authorList>
            <person name="Tani M."/>
            <person name="Igarashi Y."/>
            <person name="Ito M."/>
        </authorList>
    </citation>
    <scope>FUNCTION</scope>
    <scope>CATALYTIC ACTIVITY</scope>
    <scope>SUBCELLULAR LOCATION</scope>
    <scope>TOPOLOGY</scope>
</reference>
<reference key="9">
    <citation type="journal article" date="2006" name="J. Biol. Chem.">
        <title>Neutral ceramidase encoded by the Asah2 gene is essential for the intestinal degradation of sphingolipids.</title>
        <authorList>
            <person name="Kono M."/>
            <person name="Dreier J.L."/>
            <person name="Ellis J.M."/>
            <person name="Allende M.L."/>
            <person name="Kalkofen D.N."/>
            <person name="Sanders K.M."/>
            <person name="Bielawski J."/>
            <person name="Bielawska A."/>
            <person name="Hannun Y.A."/>
            <person name="Proia R.L."/>
        </authorList>
    </citation>
    <scope>FUNCTION</scope>
    <scope>CATALYTIC ACTIVITY</scope>
    <scope>PATHWAY</scope>
    <scope>DISRUPTION PHENOTYPE</scope>
    <scope>TISSUE SPECIFICITY</scope>
</reference>
<reference key="10">
    <citation type="journal article" date="2011" name="J. Biol. Chem.">
        <title>Novel pathway of ceramide production in mitochondria: thioesterase and neutral ceramidase produce ceramide from sphingosine and acyl-CoA.</title>
        <authorList>
            <person name="Novgorodov S.A."/>
            <person name="Wu B.X."/>
            <person name="Gudz T.I."/>
            <person name="Bielawski J."/>
            <person name="Ovchinnikova T.V."/>
            <person name="Hannun Y.A."/>
            <person name="Obeid L.M."/>
        </authorList>
    </citation>
    <scope>FUNCTION</scope>
    <scope>CATALYTIC ACTIVITY</scope>
    <scope>PATHWAY</scope>
    <scope>SUBCELLULAR LOCATION</scope>
    <scope>DISRUPTION PHENOTYPE</scope>
</reference>
<gene>
    <name type="primary">Asah2</name>
</gene>
<name>ASAH2_MOUSE</name>
<keyword id="KW-0053">Apoptosis</keyword>
<keyword id="KW-0106">Calcium</keyword>
<keyword id="KW-1003">Cell membrane</keyword>
<keyword id="KW-0903">Direct protein sequencing</keyword>
<keyword id="KW-1015">Disulfide bond</keyword>
<keyword id="KW-0325">Glycoprotein</keyword>
<keyword id="KW-0333">Golgi apparatus</keyword>
<keyword id="KW-0378">Hydrolase</keyword>
<keyword id="KW-0443">Lipid metabolism</keyword>
<keyword id="KW-0472">Membrane</keyword>
<keyword id="KW-0479">Metal-binding</keyword>
<keyword id="KW-0496">Mitochondrion</keyword>
<keyword id="KW-0597">Phosphoprotein</keyword>
<keyword id="KW-1185">Reference proteome</keyword>
<keyword id="KW-0964">Secreted</keyword>
<keyword id="KW-0735">Signal-anchor</keyword>
<keyword id="KW-0746">Sphingolipid metabolism</keyword>
<keyword id="KW-0812">Transmembrane</keyword>
<keyword id="KW-1133">Transmembrane helix</keyword>
<keyword id="KW-0832">Ubl conjugation</keyword>
<keyword id="KW-0862">Zinc</keyword>
<proteinExistence type="evidence at protein level"/>
<protein>
    <recommendedName>
        <fullName evidence="13">Neutral ceramidase</fullName>
        <shortName>N-CDase</shortName>
        <shortName>NCDase</shortName>
        <ecNumber evidence="5">3.5.1.-</ecNumber>
        <ecNumber evidence="5 6 9 10 11">3.5.1.23</ecNumber>
    </recommendedName>
    <alternativeName>
        <fullName>Acylsphingosine deacylase 2</fullName>
    </alternativeName>
    <alternativeName>
        <fullName>N-acylsphingosine amidohydrolase 2</fullName>
    </alternativeName>
    <component>
        <recommendedName>
            <fullName evidence="2">Neutral ceramidase soluble form</fullName>
        </recommendedName>
    </component>
</protein>
<accession>Q9JHE3</accession>
<accession>Q3UWP9</accession>
<accession>Q8BNP0</accession>
<accession>Q8BQN7</accession>
<accession>Q8R236</accession>
<feature type="chain" id="PRO_0000247101" description="Neutral ceramidase">
    <location>
        <begin position="1"/>
        <end position="756"/>
    </location>
</feature>
<feature type="chain" id="PRO_0000247102" description="Neutral ceramidase soluble form" evidence="1">
    <location>
        <begin position="75"/>
        <end position="756"/>
    </location>
</feature>
<feature type="topological domain" description="Cytoplasmic" evidence="4">
    <location>
        <begin position="1"/>
        <end position="11"/>
    </location>
</feature>
<feature type="transmembrane region" description="Helical; Signal-anchor for type II membrane protein" evidence="4">
    <location>
        <begin position="12"/>
        <end position="32"/>
    </location>
</feature>
<feature type="topological domain" description="Lumenal" evidence="4">
    <location>
        <begin position="33"/>
        <end position="756"/>
    </location>
</feature>
<feature type="region of interest" description="Required for correct folding and localization" evidence="2">
    <location>
        <begin position="746"/>
        <end position="756"/>
    </location>
</feature>
<feature type="active site" description="Nucleophile" evidence="1">
    <location>
        <position position="330"/>
    </location>
</feature>
<feature type="binding site" evidence="3">
    <location>
        <position position="110"/>
    </location>
    <ligand>
        <name>Ca(2+)</name>
        <dbReference type="ChEBI" id="CHEBI:29108"/>
    </ligand>
</feature>
<feature type="binding site" evidence="3">
    <location>
        <position position="170"/>
    </location>
    <ligand>
        <name>Zn(2+)</name>
        <dbReference type="ChEBI" id="CHEBI:29105"/>
    </ligand>
</feature>
<feature type="binding site" evidence="3">
    <location>
        <position position="279"/>
    </location>
    <ligand>
        <name>Zn(2+)</name>
        <dbReference type="ChEBI" id="CHEBI:29105"/>
    </ligand>
</feature>
<feature type="binding site" evidence="3">
    <location>
        <position position="516"/>
    </location>
    <ligand>
        <name>Zn(2+)</name>
        <dbReference type="ChEBI" id="CHEBI:29105"/>
    </ligand>
</feature>
<feature type="binding site" evidence="3">
    <location>
        <position position="555"/>
    </location>
    <ligand>
        <name>Zn(2+)</name>
        <dbReference type="ChEBI" id="CHEBI:29105"/>
    </ligand>
</feature>
<feature type="binding site" evidence="3">
    <location>
        <position position="688"/>
    </location>
    <ligand>
        <name>Ca(2+)</name>
        <dbReference type="ChEBI" id="CHEBI:29108"/>
    </ligand>
</feature>
<feature type="binding site" evidence="3">
    <location>
        <position position="690"/>
    </location>
    <ligand>
        <name>Ca(2+)</name>
        <dbReference type="ChEBI" id="CHEBI:29108"/>
    </ligand>
</feature>
<feature type="binding site" evidence="3">
    <location>
        <position position="693"/>
    </location>
    <ligand>
        <name>Ca(2+)</name>
        <dbReference type="ChEBI" id="CHEBI:29108"/>
    </ligand>
</feature>
<feature type="site" description="Cleavage" evidence="2">
    <location>
        <begin position="74"/>
        <end position="75"/>
    </location>
</feature>
<feature type="glycosylation site" description="O-linked (GalNAc...) threonine" evidence="4">
    <location>
        <position position="56"/>
    </location>
</feature>
<feature type="glycosylation site" description="O-linked (GalNAc...) threonine" evidence="4">
    <location>
        <position position="57"/>
    </location>
</feature>
<feature type="glycosylation site" description="O-linked (GalNAc...) threonine" evidence="4">
    <location>
        <position position="58"/>
    </location>
</feature>
<feature type="glycosylation site" description="O-linked (GalNAc...) threonine" evidence="4">
    <location>
        <position position="64"/>
    </location>
</feature>
<feature type="glycosylation site" description="N-linked (GlcNAc...) asparagine" evidence="4">
    <location>
        <position position="193"/>
    </location>
</feature>
<feature type="glycosylation site" description="N-linked (GlcNAc...) asparagine" evidence="4">
    <location>
        <position position="407"/>
    </location>
</feature>
<feature type="glycosylation site" description="N-linked (GlcNAc...) asparagine" evidence="4">
    <location>
        <position position="444"/>
    </location>
</feature>
<feature type="disulfide bond" evidence="3">
    <location>
        <begin position="338"/>
        <end position="352"/>
    </location>
</feature>
<feature type="disulfide bond" evidence="3">
    <location>
        <begin position="345"/>
        <end position="360"/>
    </location>
</feature>
<feature type="disulfide bond" evidence="3">
    <location>
        <begin position="424"/>
        <end position="474"/>
    </location>
</feature>
<feature type="sequence conflict" description="In Ref. 2; BAC38089." evidence="13" ref="2">
    <original>V</original>
    <variation>I</variation>
    <location>
        <position position="543"/>
    </location>
</feature>
<comment type="function">
    <text evidence="5 6 9 10 11 12">Plasma membrane ceramidase that hydrolyzes sphingolipid ceramides into sphingosine and free fatty acids at neutral pH (PubMed:10652340, PubMed:10753931, PubMed:16380386). Ceramides, sphingosine, and its phosphorylated form sphingosine-1-phosphate are bioactive lipids that mediate cellular signaling pathways regulating several biological processes including cell proliferation, apoptosis and differentiation (PubMed:14557071). Also catalyzes the reverse reaction allowing the synthesis of ceramides from fatty acids and sphingosine (PubMed:10652340, PubMed:21613224). Together with sphingomyelinase, participates in the production of sphingosine and sphingosine-1-phosphate from the degradation of sphingomyelin, a sphingolipid enriched in the plasma membrane of cells (PubMed:16126722). Also participates in the hydrolysis of ceramides from the extracellular milieu allowing the production of sphingosine-1-phosphate inside and outside cells (PubMed:16126722). This is the case for instance with the digestion of dietary sphingolipids in the intestinal tract (PubMed:16380386).</text>
</comment>
<comment type="catalytic activity">
    <reaction evidence="5 6 9 10 11">
        <text>an N-acylsphing-4-enine + H2O = sphing-4-enine + a fatty acid</text>
        <dbReference type="Rhea" id="RHEA:20856"/>
        <dbReference type="ChEBI" id="CHEBI:15377"/>
        <dbReference type="ChEBI" id="CHEBI:28868"/>
        <dbReference type="ChEBI" id="CHEBI:52639"/>
        <dbReference type="ChEBI" id="CHEBI:57756"/>
        <dbReference type="EC" id="3.5.1.23"/>
    </reaction>
    <physiologicalReaction direction="left-to-right" evidence="14">
        <dbReference type="Rhea" id="RHEA:20857"/>
    </physiologicalReaction>
</comment>
<comment type="catalytic activity">
    <reaction evidence="5">
        <text>N-hexadecanoylsphing-4-enine + H2O = sphing-4-enine + hexadecanoate</text>
        <dbReference type="Rhea" id="RHEA:38891"/>
        <dbReference type="ChEBI" id="CHEBI:7896"/>
        <dbReference type="ChEBI" id="CHEBI:15377"/>
        <dbReference type="ChEBI" id="CHEBI:57756"/>
        <dbReference type="ChEBI" id="CHEBI:72959"/>
    </reaction>
    <physiologicalReaction direction="left-to-right" evidence="5">
        <dbReference type="Rhea" id="RHEA:38892"/>
    </physiologicalReaction>
    <physiologicalReaction direction="right-to-left" evidence="5">
        <dbReference type="Rhea" id="RHEA:38893"/>
    </physiologicalReaction>
</comment>
<comment type="catalytic activity">
    <reaction evidence="5">
        <text>N-dodecanoylsphing-4-enine + H2O = dodecanoate + sphing-4-enine</text>
        <dbReference type="Rhea" id="RHEA:41291"/>
        <dbReference type="ChEBI" id="CHEBI:15377"/>
        <dbReference type="ChEBI" id="CHEBI:18262"/>
        <dbReference type="ChEBI" id="CHEBI:57756"/>
        <dbReference type="ChEBI" id="CHEBI:72956"/>
    </reaction>
    <physiologicalReaction direction="left-to-right" evidence="14">
        <dbReference type="Rhea" id="RHEA:41292"/>
    </physiologicalReaction>
    <physiologicalReaction direction="right-to-left" evidence="12">
        <dbReference type="Rhea" id="RHEA:41293"/>
    </physiologicalReaction>
</comment>
<comment type="catalytic activity">
    <reaction evidence="5">
        <text>N-octadecanoylsphing-4-enine + H2O = sphing-4-enine + octadecanoate</text>
        <dbReference type="Rhea" id="RHEA:41279"/>
        <dbReference type="ChEBI" id="CHEBI:15377"/>
        <dbReference type="ChEBI" id="CHEBI:25629"/>
        <dbReference type="ChEBI" id="CHEBI:57756"/>
        <dbReference type="ChEBI" id="CHEBI:72961"/>
    </reaction>
    <physiologicalReaction direction="left-to-right" evidence="14">
        <dbReference type="Rhea" id="RHEA:41280"/>
    </physiologicalReaction>
</comment>
<comment type="catalytic activity">
    <reaction evidence="3">
        <text>N-octanoylsphing-4-enine + H2O = octanoate + sphing-4-enine</text>
        <dbReference type="Rhea" id="RHEA:45092"/>
        <dbReference type="ChEBI" id="CHEBI:15377"/>
        <dbReference type="ChEBI" id="CHEBI:25646"/>
        <dbReference type="ChEBI" id="CHEBI:45815"/>
        <dbReference type="ChEBI" id="CHEBI:57756"/>
    </reaction>
    <physiologicalReaction direction="left-to-right" evidence="3">
        <dbReference type="Rhea" id="RHEA:45093"/>
    </physiologicalReaction>
</comment>
<comment type="catalytic activity">
    <reaction evidence="3">
        <text>N-(hexanoyl)sphing-4-enine + H2O = hexanoate + sphing-4-enine</text>
        <dbReference type="Rhea" id="RHEA:41295"/>
        <dbReference type="ChEBI" id="CHEBI:15377"/>
        <dbReference type="ChEBI" id="CHEBI:17120"/>
        <dbReference type="ChEBI" id="CHEBI:57756"/>
        <dbReference type="ChEBI" id="CHEBI:63867"/>
    </reaction>
    <physiologicalReaction direction="left-to-right" evidence="3">
        <dbReference type="Rhea" id="RHEA:41296"/>
    </physiologicalReaction>
</comment>
<comment type="catalytic activity">
    <reaction evidence="2">
        <text>N-tetradecanoylsphing-4-enine + H2O = tetradecanoate + sphing-4-enine</text>
        <dbReference type="Rhea" id="RHEA:41287"/>
        <dbReference type="ChEBI" id="CHEBI:15377"/>
        <dbReference type="ChEBI" id="CHEBI:30807"/>
        <dbReference type="ChEBI" id="CHEBI:57756"/>
        <dbReference type="ChEBI" id="CHEBI:72957"/>
    </reaction>
    <physiologicalReaction direction="right-to-left" evidence="2">
        <dbReference type="Rhea" id="RHEA:41289"/>
    </physiologicalReaction>
</comment>
<comment type="catalytic activity">
    <reaction evidence="2">
        <text>N-(9Z-octadecenoyl)-sphing-4-enine + H2O = sphing-4-enine + (9Z)-octadecenoate</text>
        <dbReference type="Rhea" id="RHEA:41299"/>
        <dbReference type="ChEBI" id="CHEBI:15377"/>
        <dbReference type="ChEBI" id="CHEBI:30823"/>
        <dbReference type="ChEBI" id="CHEBI:57756"/>
        <dbReference type="ChEBI" id="CHEBI:77996"/>
    </reaction>
    <physiologicalReaction direction="left-to-right" evidence="3">
        <dbReference type="Rhea" id="RHEA:41300"/>
    </physiologicalReaction>
    <physiologicalReaction direction="right-to-left" evidence="2">
        <dbReference type="Rhea" id="RHEA:41301"/>
    </physiologicalReaction>
</comment>
<comment type="catalytic activity">
    <reaction evidence="2">
        <text>N-(15Z-tetracosenoyl)-sphing-4-enine + H2O = (15Z)-tetracosenoate + sphing-4-enine</text>
        <dbReference type="Rhea" id="RHEA:41267"/>
        <dbReference type="ChEBI" id="CHEBI:15377"/>
        <dbReference type="ChEBI" id="CHEBI:32392"/>
        <dbReference type="ChEBI" id="CHEBI:57756"/>
        <dbReference type="ChEBI" id="CHEBI:74450"/>
    </reaction>
    <physiologicalReaction direction="right-to-left" evidence="2">
        <dbReference type="Rhea" id="RHEA:41269"/>
    </physiologicalReaction>
</comment>
<comment type="catalytic activity">
    <reaction evidence="5">
        <text>sphinganine + hexadecanoate = N-hexadecanoylsphinganine + H2O</text>
        <dbReference type="Rhea" id="RHEA:43440"/>
        <dbReference type="ChEBI" id="CHEBI:7896"/>
        <dbReference type="ChEBI" id="CHEBI:15377"/>
        <dbReference type="ChEBI" id="CHEBI:57817"/>
        <dbReference type="ChEBI" id="CHEBI:67042"/>
    </reaction>
    <physiologicalReaction direction="right-to-left" evidence="14">
        <dbReference type="Rhea" id="RHEA:43442"/>
    </physiologicalReaction>
</comment>
<comment type="catalytic activity">
    <reaction evidence="5">
        <text>N-(octadecanoyl)-sphinganine + H2O = sphinganine + octadecanoate</text>
        <dbReference type="Rhea" id="RHEA:45008"/>
        <dbReference type="ChEBI" id="CHEBI:15377"/>
        <dbReference type="ChEBI" id="CHEBI:25629"/>
        <dbReference type="ChEBI" id="CHEBI:57817"/>
        <dbReference type="ChEBI" id="CHEBI:67033"/>
    </reaction>
    <physiologicalReaction direction="left-to-right" evidence="14">
        <dbReference type="Rhea" id="RHEA:45009"/>
    </physiologicalReaction>
</comment>
<comment type="cofactor">
    <cofactor evidence="3">
        <name>Zn(2+)</name>
        <dbReference type="ChEBI" id="CHEBI:29105"/>
    </cofactor>
    <text evidence="3">Binds 1 zinc ion per subunit.</text>
</comment>
<comment type="activity regulation">
    <text evidence="9">Inhibited by D-erythro-MAPP.</text>
</comment>
<comment type="biophysicochemical properties">
    <kinetics>
        <KM evidence="5">22.3 mM for C12-4-nitrobenzo-2-oxa-1,3-diazole-ceramide</KM>
        <KM evidence="5">72.4 mM for N-hexadecanoylsphing-4-enine</KM>
        <Vmax evidence="5">29.1 umol/min/mg enzyme with C12-4-nitrobenzo-2-oxa-1,3-diazole-ceramide as substrate</Vmax>
        <Vmax evidence="5">3.6 umol/min/mg enzyme with N-hexadecanoylsphing-4-enine as substrate</Vmax>
    </kinetics>
    <phDependence>
        <text evidence="5">Optimum pH is 7.5.</text>
    </phDependence>
</comment>
<comment type="pathway">
    <text evidence="11 12">Lipid metabolism; sphingolipid metabolism.</text>
</comment>
<comment type="subunit">
    <text evidence="8">May interact with CAV1.</text>
</comment>
<comment type="subcellular location">
    <molecule>Neutral ceramidase</molecule>
    <subcellularLocation>
        <location evidence="7 8 10">Cell membrane</location>
        <topology evidence="10">Single-pass type II membrane protein</topology>
    </subcellularLocation>
    <subcellularLocation>
        <location evidence="8">Membrane raft</location>
        <topology evidence="10">Single-pass type II membrane protein</topology>
    </subcellularLocation>
    <subcellularLocation>
        <location evidence="8">Membrane</location>
        <location evidence="8">Caveola</location>
        <topology evidence="10">Single-pass type II membrane protein</topology>
    </subcellularLocation>
    <subcellularLocation>
        <location evidence="3">Golgi apparatus membrane</location>
        <topology evidence="10">Single-pass type II membrane protein</topology>
    </subcellularLocation>
    <subcellularLocation>
        <location evidence="12">Mitochondrion</location>
    </subcellularLocation>
    <subcellularLocation>
        <location evidence="3">Secreted</location>
        <location evidence="3">Extracellular exosome</location>
    </subcellularLocation>
    <text evidence="3 8">Enriched in exosomes upon stimulation by cytokine (By similarity). Enriched in caveolae and lipid rafts (PubMed:12921776).</text>
</comment>
<comment type="subcellular location">
    <molecule>Neutral ceramidase soluble form</molecule>
    <subcellularLocation>
        <location evidence="10">Secreted</location>
    </subcellularLocation>
</comment>
<comment type="tissue specificity">
    <text evidence="6 9 11">Widely expressed (PubMed:10753931, PubMed:14557071). Strongly expressed in small intestine and to a lower extent in liver and kidney (PubMed:10753931). Highly expressed in duodenum, jejunum and ileum along the brush border of the small intestine (at protein level) (PubMed:16380386).</text>
</comment>
<comment type="PTM">
    <text evidence="2">Proteolytic cleavage of the N-terminus removes the signal-anchor and produces a soluble form of the protein.</text>
</comment>
<comment type="PTM">
    <text evidence="5 6">N-glycosylated. Required for enzyme activity.</text>
</comment>
<comment type="PTM">
    <text evidence="3">O-glycosylated. Required to retain it as a type II membrane protein at the cell surface.</text>
</comment>
<comment type="PTM">
    <text evidence="2">Phosphorylated. May prevent ubiquitination and subsequent degradation.</text>
</comment>
<comment type="PTM">
    <text evidence="2">Ubiquitinated, leading to its degradation by the proteasome. Ubiquitination is triggered by nitric oxide.</text>
</comment>
<comment type="disruption phenotype">
    <text evidence="11 12">Homozygous knockout mice have a normal life span and do not show obvious abnormalities or major alterations in total ceramide levels in tissues (PubMed:16380386). However, they are deficient in the intestinal digestion of dietary ceramides (PubMed:16380386). A decrease in total ceramides in liver is also observed (PubMed:21613224).</text>
</comment>
<comment type="similarity">
    <text evidence="13">Belongs to the neutral ceramidase family.</text>
</comment>
<dbReference type="EC" id="3.5.1.-" evidence="5"/>
<dbReference type="EC" id="3.5.1.23" evidence="5 6 9 10 11"/>
<dbReference type="EMBL" id="AB037111">
    <property type="protein sequence ID" value="BAA94545.1"/>
    <property type="molecule type" value="mRNA"/>
</dbReference>
<dbReference type="EMBL" id="AB037181">
    <property type="protein sequence ID" value="BAA94546.1"/>
    <property type="molecule type" value="mRNA"/>
</dbReference>
<dbReference type="EMBL" id="AK047692">
    <property type="protein sequence ID" value="BAC33126.1"/>
    <property type="molecule type" value="mRNA"/>
</dbReference>
<dbReference type="EMBL" id="AK080951">
    <property type="protein sequence ID" value="BAC38089.1"/>
    <property type="molecule type" value="mRNA"/>
</dbReference>
<dbReference type="EMBL" id="AK136189">
    <property type="protein sequence ID" value="BAE22865.1"/>
    <property type="molecule type" value="mRNA"/>
</dbReference>
<dbReference type="EMBL" id="AK166100">
    <property type="protein sequence ID" value="BAE38571.1"/>
    <property type="molecule type" value="mRNA"/>
</dbReference>
<dbReference type="EMBL" id="BC022604">
    <property type="protein sequence ID" value="AAH22604.1"/>
    <property type="molecule type" value="mRNA"/>
</dbReference>
<dbReference type="CCDS" id="CCDS29749.1"/>
<dbReference type="RefSeq" id="NP_061300.1">
    <property type="nucleotide sequence ID" value="NM_018830.1"/>
</dbReference>
<dbReference type="RefSeq" id="XP_011245585.1">
    <property type="nucleotide sequence ID" value="XM_011247283.2"/>
</dbReference>
<dbReference type="RefSeq" id="XP_011245586.1">
    <property type="nucleotide sequence ID" value="XM_011247284.2"/>
</dbReference>
<dbReference type="RefSeq" id="XP_011245587.1">
    <property type="nucleotide sequence ID" value="XM_011247285.2"/>
</dbReference>
<dbReference type="RefSeq" id="XP_011245588.1">
    <property type="nucleotide sequence ID" value="XM_011247286.2"/>
</dbReference>
<dbReference type="RefSeq" id="XP_011245589.1">
    <property type="nucleotide sequence ID" value="XM_011247287.2"/>
</dbReference>
<dbReference type="RefSeq" id="XP_011245591.1">
    <property type="nucleotide sequence ID" value="XM_011247289.1"/>
</dbReference>
<dbReference type="RefSeq" id="XP_011245592.1">
    <property type="nucleotide sequence ID" value="XM_011247290.2"/>
</dbReference>
<dbReference type="SMR" id="Q9JHE3"/>
<dbReference type="BioGRID" id="207662">
    <property type="interactions" value="1"/>
</dbReference>
<dbReference type="FunCoup" id="Q9JHE3">
    <property type="interactions" value="302"/>
</dbReference>
<dbReference type="STRING" id="10090.ENSMUSP00000157424"/>
<dbReference type="ChEMBL" id="CHEMBL2146344"/>
<dbReference type="SwissLipids" id="SLP:000000216"/>
<dbReference type="GlyCosmos" id="Q9JHE3">
    <property type="glycosylation" value="7 sites, No reported glycans"/>
</dbReference>
<dbReference type="GlyGen" id="Q9JHE3">
    <property type="glycosylation" value="12 sites, 5 N-linked glycans (5 sites)"/>
</dbReference>
<dbReference type="iPTMnet" id="Q9JHE3"/>
<dbReference type="PhosphoSitePlus" id="Q9JHE3"/>
<dbReference type="jPOST" id="Q9JHE3"/>
<dbReference type="PaxDb" id="10090-ENSMUSP00000093830"/>
<dbReference type="ProteomicsDB" id="281909"/>
<dbReference type="Pumba" id="Q9JHE3"/>
<dbReference type="Antibodypedia" id="27845">
    <property type="antibodies" value="226 antibodies from 31 providers"/>
</dbReference>
<dbReference type="DNASU" id="54447"/>
<dbReference type="Ensembl" id="ENSMUST00000096119.5">
    <property type="protein sequence ID" value="ENSMUSP00000093830.5"/>
    <property type="gene ID" value="ENSMUSG00000024887.11"/>
</dbReference>
<dbReference type="Ensembl" id="ENSMUST00000236030.2">
    <property type="protein sequence ID" value="ENSMUSP00000158185.2"/>
    <property type="gene ID" value="ENSMUSG00000024887.11"/>
</dbReference>
<dbReference type="Ensembl" id="ENSMUST00000236504.2">
    <property type="protein sequence ID" value="ENSMUSP00000157744.2"/>
    <property type="gene ID" value="ENSMUSG00000024887.11"/>
</dbReference>
<dbReference type="Ensembl" id="ENSMUST00000237104.2">
    <property type="protein sequence ID" value="ENSMUSP00000157424.2"/>
    <property type="gene ID" value="ENSMUSG00000024887.11"/>
</dbReference>
<dbReference type="GeneID" id="54447"/>
<dbReference type="KEGG" id="mmu:54447"/>
<dbReference type="UCSC" id="uc008hew.1">
    <property type="organism name" value="mouse"/>
</dbReference>
<dbReference type="AGR" id="MGI:1859310"/>
<dbReference type="CTD" id="56624"/>
<dbReference type="MGI" id="MGI:1859310">
    <property type="gene designation" value="Asah2"/>
</dbReference>
<dbReference type="VEuPathDB" id="HostDB:ENSMUSG00000024887"/>
<dbReference type="eggNOG" id="KOG2232">
    <property type="taxonomic scope" value="Eukaryota"/>
</dbReference>
<dbReference type="GeneTree" id="ENSGT00390000015792"/>
<dbReference type="HOGENOM" id="CLU_011300_2_0_1"/>
<dbReference type="InParanoid" id="Q9JHE3"/>
<dbReference type="OMA" id="GTTVQTC"/>
<dbReference type="OrthoDB" id="191371at2759"/>
<dbReference type="PhylomeDB" id="Q9JHE3"/>
<dbReference type="TreeFam" id="TF300786"/>
<dbReference type="BRENDA" id="3.5.1.23">
    <property type="organism ID" value="3474"/>
</dbReference>
<dbReference type="Reactome" id="R-MMU-9840310">
    <property type="pathway name" value="Glycosphingolipid catabolism"/>
</dbReference>
<dbReference type="SABIO-RK" id="Q9JHE3"/>
<dbReference type="UniPathway" id="UPA00222"/>
<dbReference type="BioGRID-ORCS" id="54447">
    <property type="hits" value="2 hits in 79 CRISPR screens"/>
</dbReference>
<dbReference type="ChiTaRS" id="Asah2">
    <property type="organism name" value="mouse"/>
</dbReference>
<dbReference type="PRO" id="PR:Q9JHE3"/>
<dbReference type="Proteomes" id="UP000000589">
    <property type="component" value="Chromosome 19"/>
</dbReference>
<dbReference type="RNAct" id="Q9JHE3">
    <property type="molecule type" value="protein"/>
</dbReference>
<dbReference type="Bgee" id="ENSMUSG00000024887">
    <property type="expression patterns" value="Expressed in epithelium of small intestine and 226 other cell types or tissues"/>
</dbReference>
<dbReference type="ExpressionAtlas" id="Q9JHE3">
    <property type="expression patterns" value="baseline and differential"/>
</dbReference>
<dbReference type="GO" id="GO:0005901">
    <property type="term" value="C:caveola"/>
    <property type="evidence" value="ECO:0000314"/>
    <property type="project" value="UniProtKB"/>
</dbReference>
<dbReference type="GO" id="GO:0070062">
    <property type="term" value="C:extracellular exosome"/>
    <property type="evidence" value="ECO:0000250"/>
    <property type="project" value="UniProtKB"/>
</dbReference>
<dbReference type="GO" id="GO:0005615">
    <property type="term" value="C:extracellular space"/>
    <property type="evidence" value="ECO:0000314"/>
    <property type="project" value="UniProtKB"/>
</dbReference>
<dbReference type="GO" id="GO:0005794">
    <property type="term" value="C:Golgi apparatus"/>
    <property type="evidence" value="ECO:0000250"/>
    <property type="project" value="UniProtKB"/>
</dbReference>
<dbReference type="GO" id="GO:0000139">
    <property type="term" value="C:Golgi membrane"/>
    <property type="evidence" value="ECO:0007669"/>
    <property type="project" value="UniProtKB-SubCell"/>
</dbReference>
<dbReference type="GO" id="GO:0016020">
    <property type="term" value="C:membrane"/>
    <property type="evidence" value="ECO:0000314"/>
    <property type="project" value="MGI"/>
</dbReference>
<dbReference type="GO" id="GO:0005739">
    <property type="term" value="C:mitochondrion"/>
    <property type="evidence" value="ECO:0000314"/>
    <property type="project" value="UniProtKB"/>
</dbReference>
<dbReference type="GO" id="GO:0005886">
    <property type="term" value="C:plasma membrane"/>
    <property type="evidence" value="ECO:0000314"/>
    <property type="project" value="UniProtKB"/>
</dbReference>
<dbReference type="GO" id="GO:0005509">
    <property type="term" value="F:calcium ion binding"/>
    <property type="evidence" value="ECO:0000250"/>
    <property type="project" value="UniProtKB"/>
</dbReference>
<dbReference type="GO" id="GO:0017040">
    <property type="term" value="F:N-acylsphingosine amidohydrolase activity"/>
    <property type="evidence" value="ECO:0000314"/>
    <property type="project" value="UniProtKB"/>
</dbReference>
<dbReference type="GO" id="GO:0008270">
    <property type="term" value="F:zinc ion binding"/>
    <property type="evidence" value="ECO:0000250"/>
    <property type="project" value="UniProtKB"/>
</dbReference>
<dbReference type="GO" id="GO:0006915">
    <property type="term" value="P:apoptotic process"/>
    <property type="evidence" value="ECO:0007669"/>
    <property type="project" value="UniProtKB-KW"/>
</dbReference>
<dbReference type="GO" id="GO:0046513">
    <property type="term" value="P:ceramide biosynthetic process"/>
    <property type="evidence" value="ECO:0000315"/>
    <property type="project" value="UniProtKB"/>
</dbReference>
<dbReference type="GO" id="GO:0046514">
    <property type="term" value="P:ceramide catabolic process"/>
    <property type="evidence" value="ECO:0000314"/>
    <property type="project" value="UniProtKB"/>
</dbReference>
<dbReference type="GO" id="GO:0006672">
    <property type="term" value="P:ceramide metabolic process"/>
    <property type="evidence" value="ECO:0000250"/>
    <property type="project" value="UniProtKB"/>
</dbReference>
<dbReference type="GO" id="GO:0044241">
    <property type="term" value="P:lipid digestion"/>
    <property type="evidence" value="ECO:0000315"/>
    <property type="project" value="UniProtKB"/>
</dbReference>
<dbReference type="GO" id="GO:2001234">
    <property type="term" value="P:negative regulation of apoptotic signaling pathway"/>
    <property type="evidence" value="ECO:0000250"/>
    <property type="project" value="UniProtKB"/>
</dbReference>
<dbReference type="GO" id="GO:0007346">
    <property type="term" value="P:regulation of mitotic cell cycle"/>
    <property type="evidence" value="ECO:0000250"/>
    <property type="project" value="UniProtKB"/>
</dbReference>
<dbReference type="GO" id="GO:0046512">
    <property type="term" value="P:sphingosine biosynthetic process"/>
    <property type="evidence" value="ECO:0000314"/>
    <property type="project" value="UniProtKB"/>
</dbReference>
<dbReference type="GO" id="GO:0006670">
    <property type="term" value="P:sphingosine metabolic process"/>
    <property type="evidence" value="ECO:0000250"/>
    <property type="project" value="UniProtKB"/>
</dbReference>
<dbReference type="FunFam" id="2.60.40.2300:FF:000001">
    <property type="entry name" value="N-acylsphingosine amidohydrolase 2"/>
    <property type="match status" value="1"/>
</dbReference>
<dbReference type="Gene3D" id="2.60.40.2300">
    <property type="entry name" value="Neutral/alkaline non-lysosomal ceramidase, C-terminal domain"/>
    <property type="match status" value="1"/>
</dbReference>
<dbReference type="InterPro" id="IPR006823">
    <property type="entry name" value="Ceramidase_alk"/>
</dbReference>
<dbReference type="InterPro" id="IPR038445">
    <property type="entry name" value="NCDase_C_sf"/>
</dbReference>
<dbReference type="InterPro" id="IPR031331">
    <property type="entry name" value="NEUT/ALK_ceramidase_C"/>
</dbReference>
<dbReference type="InterPro" id="IPR031329">
    <property type="entry name" value="NEUT/ALK_ceramidase_N"/>
</dbReference>
<dbReference type="PANTHER" id="PTHR12670">
    <property type="entry name" value="CERAMIDASE"/>
    <property type="match status" value="1"/>
</dbReference>
<dbReference type="PANTHER" id="PTHR12670:SF1">
    <property type="entry name" value="NEUTRAL CERAMIDASE"/>
    <property type="match status" value="1"/>
</dbReference>
<dbReference type="Pfam" id="PF04734">
    <property type="entry name" value="Ceramidase_alk"/>
    <property type="match status" value="1"/>
</dbReference>
<dbReference type="Pfam" id="PF17048">
    <property type="entry name" value="Ceramidse_alk_C"/>
    <property type="match status" value="1"/>
</dbReference>
<sequence length="756" mass="83509">MAKRTFSTLEAFLIFLLVIMTVITVALLTLLFVTSGTIENHKDSGNHWFSTTLGSTTTQPPPITQTPNFPSFRNFSGYYIGVGRADCTGQVSDINLMGYGKNGQNARGLLTRLFSRAFILADPDGSNRMAFVSVELCMISQRLRLEVLKRLESKYGSLYRRDNVILSAIHTHSGPAGFFQYTLYILASEGFSNRTFQYIVSGIMKSIDIAHTNLKPGKIFINKGNVANVQINRSPSSYLLNPQSERARYSSNTDKEMLVLKLVDLNGEDLGLISWFAIHPVSMNNSNHFVNSDNMGYAAYLFEQEKNKGYLPGQGPFVAGFASSNLGDVSPNILGPHCVNTGESCDNDKSTCPNGGPSMCMASGPGQDMFESTHIIGRIIYQKAKELYASASQEVTGPVLAAHQWVNMTDVSVQLNATHTVKTCKPALGYSFAAGTIDGVSGLNITQGTTEGDPFWDTLRDQLLGKPSEEIVECQKPKPILLHSGELTIPHPWQPDIVDVQIVTVGSLAIAAIPGELTTMSGRRFREAIKKEFALYGMKDMTVVIAGLSNVYTHYITTYEEYQAQRYEAASTIYGPHTLSAYIQLFRDLAKAIATDTVANMSSGPEPPFFKNLIASLIPNIADRAPIGKHFGDVLQPAKPEYRVGEVVEVIFVGANPKNSAENQTHQTFLTVEKYEDSVADWQIMYNDASWETRFYWHKGILGLSNATIYWHIPDTAYPGIYRIRYFGHNRKQELLKPAVILAFEGISSPFEVVTT</sequence>
<organism>
    <name type="scientific">Mus musculus</name>
    <name type="common">Mouse</name>
    <dbReference type="NCBI Taxonomy" id="10090"/>
    <lineage>
        <taxon>Eukaryota</taxon>
        <taxon>Metazoa</taxon>
        <taxon>Chordata</taxon>
        <taxon>Craniata</taxon>
        <taxon>Vertebrata</taxon>
        <taxon>Euteleostomi</taxon>
        <taxon>Mammalia</taxon>
        <taxon>Eutheria</taxon>
        <taxon>Euarchontoglires</taxon>
        <taxon>Glires</taxon>
        <taxon>Rodentia</taxon>
        <taxon>Myomorpha</taxon>
        <taxon>Muroidea</taxon>
        <taxon>Muridae</taxon>
        <taxon>Murinae</taxon>
        <taxon>Mus</taxon>
        <taxon>Mus</taxon>
    </lineage>
</organism>